<sequence length="134" mass="14625">MMNVPEGFQPLFRSSPLLDLLGPFFCRQDAQRQLVVALRIDEKHCNHGGTAHGGLLSTLADVGLGYAMAFSREPPQPMVTVGLRLDFCGVARVGDWLEVHTRVDKLGQRMAFASARLHSGERLVASASGVFHLP</sequence>
<reference key="1">
    <citation type="journal article" date="2000" name="Nature">
        <title>Complete genome sequence of Pseudomonas aeruginosa PAO1, an opportunistic pathogen.</title>
        <authorList>
            <person name="Stover C.K."/>
            <person name="Pham X.-Q.T."/>
            <person name="Erwin A.L."/>
            <person name="Mizoguchi S.D."/>
            <person name="Warrener P."/>
            <person name="Hickey M.J."/>
            <person name="Brinkman F.S.L."/>
            <person name="Hufnagle W.O."/>
            <person name="Kowalik D.J."/>
            <person name="Lagrou M."/>
            <person name="Garber R.L."/>
            <person name="Goltry L."/>
            <person name="Tolentino E."/>
            <person name="Westbrock-Wadman S."/>
            <person name="Yuan Y."/>
            <person name="Brody L.L."/>
            <person name="Coulter S.N."/>
            <person name="Folger K.R."/>
            <person name="Kas A."/>
            <person name="Larbig K."/>
            <person name="Lim R.M."/>
            <person name="Smith K.A."/>
            <person name="Spencer D.H."/>
            <person name="Wong G.K.-S."/>
            <person name="Wu Z."/>
            <person name="Paulsen I.T."/>
            <person name="Reizer J."/>
            <person name="Saier M.H. Jr."/>
            <person name="Hancock R.E.W."/>
            <person name="Lory S."/>
            <person name="Olson M.V."/>
        </authorList>
    </citation>
    <scope>NUCLEOTIDE SEQUENCE [LARGE SCALE GENOMIC DNA]</scope>
    <source>
        <strain>ATCC 15692 / DSM 22644 / CIP 104116 / JCM 14847 / LMG 12228 / 1C / PRS 101 / PAO1</strain>
    </source>
</reference>
<name>Y474_PSEAE</name>
<proteinExistence type="inferred from homology"/>
<gene>
    <name type="ordered locus">PA0474</name>
</gene>
<feature type="chain" id="PRO_0000156685" description="Putative esterase PA0474">
    <location>
        <begin position="1"/>
        <end position="134"/>
    </location>
</feature>
<evidence type="ECO:0000305" key="1"/>
<protein>
    <recommendedName>
        <fullName>Putative esterase PA0474</fullName>
        <ecNumber>3.1.2.-</ecNumber>
    </recommendedName>
</protein>
<organism>
    <name type="scientific">Pseudomonas aeruginosa (strain ATCC 15692 / DSM 22644 / CIP 104116 / JCM 14847 / LMG 12228 / 1C / PRS 101 / PAO1)</name>
    <dbReference type="NCBI Taxonomy" id="208964"/>
    <lineage>
        <taxon>Bacteria</taxon>
        <taxon>Pseudomonadati</taxon>
        <taxon>Pseudomonadota</taxon>
        <taxon>Gammaproteobacteria</taxon>
        <taxon>Pseudomonadales</taxon>
        <taxon>Pseudomonadaceae</taxon>
        <taxon>Pseudomonas</taxon>
    </lineage>
</organism>
<dbReference type="EC" id="3.1.2.-"/>
<dbReference type="EMBL" id="AE004091">
    <property type="protein sequence ID" value="AAG03863.1"/>
    <property type="molecule type" value="Genomic_DNA"/>
</dbReference>
<dbReference type="PIR" id="H83585">
    <property type="entry name" value="H83585"/>
</dbReference>
<dbReference type="RefSeq" id="NP_249165.1">
    <property type="nucleotide sequence ID" value="NC_002516.2"/>
</dbReference>
<dbReference type="RefSeq" id="WP_003118845.1">
    <property type="nucleotide sequence ID" value="NZ_QZGE01000010.1"/>
</dbReference>
<dbReference type="SMR" id="Q9I644"/>
<dbReference type="STRING" id="208964.PA0474"/>
<dbReference type="PaxDb" id="208964-PA0474"/>
<dbReference type="GeneID" id="877866"/>
<dbReference type="KEGG" id="pae:PA0474"/>
<dbReference type="PATRIC" id="fig|208964.12.peg.501"/>
<dbReference type="PseudoCAP" id="PA0474"/>
<dbReference type="HOGENOM" id="CLU_089876_8_1_6"/>
<dbReference type="InParanoid" id="Q9I644"/>
<dbReference type="OrthoDB" id="7061558at2"/>
<dbReference type="PhylomeDB" id="Q9I644"/>
<dbReference type="BioCyc" id="PAER208964:G1FZ6-479-MONOMER"/>
<dbReference type="Proteomes" id="UP000002438">
    <property type="component" value="Chromosome"/>
</dbReference>
<dbReference type="GO" id="GO:0047617">
    <property type="term" value="F:fatty acyl-CoA hydrolase activity"/>
    <property type="evidence" value="ECO:0000318"/>
    <property type="project" value="GO_Central"/>
</dbReference>
<dbReference type="CDD" id="cd03443">
    <property type="entry name" value="PaaI_thioesterase"/>
    <property type="match status" value="1"/>
</dbReference>
<dbReference type="Gene3D" id="3.10.129.10">
    <property type="entry name" value="Hotdog Thioesterase"/>
    <property type="match status" value="1"/>
</dbReference>
<dbReference type="InterPro" id="IPR039298">
    <property type="entry name" value="ACOT13"/>
</dbReference>
<dbReference type="InterPro" id="IPR029069">
    <property type="entry name" value="HotDog_dom_sf"/>
</dbReference>
<dbReference type="InterPro" id="IPR006683">
    <property type="entry name" value="Thioestr_dom"/>
</dbReference>
<dbReference type="PANTHER" id="PTHR21660:SF1">
    <property type="entry name" value="ACYL-COENZYME A THIOESTERASE 13"/>
    <property type="match status" value="1"/>
</dbReference>
<dbReference type="PANTHER" id="PTHR21660">
    <property type="entry name" value="THIOESTERASE SUPERFAMILY MEMBER-RELATED"/>
    <property type="match status" value="1"/>
</dbReference>
<dbReference type="Pfam" id="PF03061">
    <property type="entry name" value="4HBT"/>
    <property type="match status" value="1"/>
</dbReference>
<dbReference type="SUPFAM" id="SSF54637">
    <property type="entry name" value="Thioesterase/thiol ester dehydrase-isomerase"/>
    <property type="match status" value="1"/>
</dbReference>
<comment type="similarity">
    <text evidence="1">Belongs to the thioesterase PaaI family.</text>
</comment>
<accession>Q9I644</accession>
<keyword id="KW-0378">Hydrolase</keyword>
<keyword id="KW-1185">Reference proteome</keyword>